<name>RL19_TREPA</name>
<gene>
    <name type="primary">rplS</name>
    <name type="ordered locus">TP_0909</name>
</gene>
<keyword id="KW-1185">Reference proteome</keyword>
<keyword id="KW-0687">Ribonucleoprotein</keyword>
<keyword id="KW-0689">Ribosomal protein</keyword>
<evidence type="ECO:0000250" key="1"/>
<evidence type="ECO:0000305" key="2"/>
<protein>
    <recommendedName>
        <fullName evidence="2">Large ribosomal subunit protein bL19</fullName>
    </recommendedName>
    <alternativeName>
        <fullName>50S ribosomal protein L19</fullName>
    </alternativeName>
</protein>
<sequence length="123" mass="14192">MSCHLIQQIENQQRKEPAETFRVGDTVRVHFKIVEGKTERIQAYEGLVLCFKNSGVRRTFTVRKNSYGVGVERIFPLHSPRIERVDVVRAGKVRRAKLYYIREKIGKAARIKARIVKKPSPSA</sequence>
<dbReference type="EMBL" id="AE000520">
    <property type="protein sequence ID" value="AAC65861.1"/>
    <property type="molecule type" value="Genomic_DNA"/>
</dbReference>
<dbReference type="PIR" id="B71268">
    <property type="entry name" value="B71268"/>
</dbReference>
<dbReference type="RefSeq" id="WP_010882352.1">
    <property type="nucleotide sequence ID" value="NC_021490.2"/>
</dbReference>
<dbReference type="SMR" id="O83879"/>
<dbReference type="IntAct" id="O83879">
    <property type="interactions" value="3"/>
</dbReference>
<dbReference type="STRING" id="243276.TP_0909"/>
<dbReference type="EnsemblBacteria" id="AAC65861">
    <property type="protein sequence ID" value="AAC65861"/>
    <property type="gene ID" value="TP_0909"/>
</dbReference>
<dbReference type="GeneID" id="93876659"/>
<dbReference type="KEGG" id="tpa:TP_0909"/>
<dbReference type="KEGG" id="tpw:TPANIC_0909"/>
<dbReference type="eggNOG" id="COG0335">
    <property type="taxonomic scope" value="Bacteria"/>
</dbReference>
<dbReference type="HOGENOM" id="CLU_103507_2_2_12"/>
<dbReference type="OrthoDB" id="9803541at2"/>
<dbReference type="Proteomes" id="UP000000811">
    <property type="component" value="Chromosome"/>
</dbReference>
<dbReference type="GO" id="GO:0022625">
    <property type="term" value="C:cytosolic large ribosomal subunit"/>
    <property type="evidence" value="ECO:0007669"/>
    <property type="project" value="TreeGrafter"/>
</dbReference>
<dbReference type="GO" id="GO:0003735">
    <property type="term" value="F:structural constituent of ribosome"/>
    <property type="evidence" value="ECO:0007669"/>
    <property type="project" value="InterPro"/>
</dbReference>
<dbReference type="GO" id="GO:0006412">
    <property type="term" value="P:translation"/>
    <property type="evidence" value="ECO:0007669"/>
    <property type="project" value="UniProtKB-UniRule"/>
</dbReference>
<dbReference type="FunFam" id="2.30.30.790:FF:000001">
    <property type="entry name" value="50S ribosomal protein L19"/>
    <property type="match status" value="1"/>
</dbReference>
<dbReference type="Gene3D" id="2.30.30.790">
    <property type="match status" value="1"/>
</dbReference>
<dbReference type="HAMAP" id="MF_00402">
    <property type="entry name" value="Ribosomal_bL19"/>
    <property type="match status" value="1"/>
</dbReference>
<dbReference type="InterPro" id="IPR001857">
    <property type="entry name" value="Ribosomal_bL19"/>
</dbReference>
<dbReference type="InterPro" id="IPR018257">
    <property type="entry name" value="Ribosomal_bL19_CS"/>
</dbReference>
<dbReference type="InterPro" id="IPR038657">
    <property type="entry name" value="Ribosomal_bL19_sf"/>
</dbReference>
<dbReference type="InterPro" id="IPR008991">
    <property type="entry name" value="Translation_prot_SH3-like_sf"/>
</dbReference>
<dbReference type="NCBIfam" id="TIGR01024">
    <property type="entry name" value="rplS_bact"/>
    <property type="match status" value="1"/>
</dbReference>
<dbReference type="PANTHER" id="PTHR15680:SF9">
    <property type="entry name" value="LARGE RIBOSOMAL SUBUNIT PROTEIN BL19M"/>
    <property type="match status" value="1"/>
</dbReference>
<dbReference type="PANTHER" id="PTHR15680">
    <property type="entry name" value="RIBOSOMAL PROTEIN L19"/>
    <property type="match status" value="1"/>
</dbReference>
<dbReference type="Pfam" id="PF01245">
    <property type="entry name" value="Ribosomal_L19"/>
    <property type="match status" value="1"/>
</dbReference>
<dbReference type="PIRSF" id="PIRSF002191">
    <property type="entry name" value="Ribosomal_L19"/>
    <property type="match status" value="1"/>
</dbReference>
<dbReference type="PRINTS" id="PR00061">
    <property type="entry name" value="RIBOSOMALL19"/>
</dbReference>
<dbReference type="SUPFAM" id="SSF50104">
    <property type="entry name" value="Translation proteins SH3-like domain"/>
    <property type="match status" value="1"/>
</dbReference>
<dbReference type="PROSITE" id="PS01015">
    <property type="entry name" value="RIBOSOMAL_L19"/>
    <property type="match status" value="1"/>
</dbReference>
<proteinExistence type="inferred from homology"/>
<feature type="chain" id="PRO_0000163561" description="Large ribosomal subunit protein bL19">
    <location>
        <begin position="1"/>
        <end position="123"/>
    </location>
</feature>
<organism>
    <name type="scientific">Treponema pallidum (strain Nichols)</name>
    <dbReference type="NCBI Taxonomy" id="243276"/>
    <lineage>
        <taxon>Bacteria</taxon>
        <taxon>Pseudomonadati</taxon>
        <taxon>Spirochaetota</taxon>
        <taxon>Spirochaetia</taxon>
        <taxon>Spirochaetales</taxon>
        <taxon>Treponemataceae</taxon>
        <taxon>Treponema</taxon>
    </lineage>
</organism>
<accession>O83879</accession>
<reference key="1">
    <citation type="journal article" date="1998" name="Science">
        <title>Complete genome sequence of Treponema pallidum, the syphilis spirochete.</title>
        <authorList>
            <person name="Fraser C.M."/>
            <person name="Norris S.J."/>
            <person name="Weinstock G.M."/>
            <person name="White O."/>
            <person name="Sutton G.G."/>
            <person name="Dodson R.J."/>
            <person name="Gwinn M.L."/>
            <person name="Hickey E.K."/>
            <person name="Clayton R.A."/>
            <person name="Ketchum K.A."/>
            <person name="Sodergren E."/>
            <person name="Hardham J.M."/>
            <person name="McLeod M.P."/>
            <person name="Salzberg S.L."/>
            <person name="Peterson J.D."/>
            <person name="Khalak H.G."/>
            <person name="Richardson D.L."/>
            <person name="Howell J.K."/>
            <person name="Chidambaram M."/>
            <person name="Utterback T.R."/>
            <person name="McDonald L.A."/>
            <person name="Artiach P."/>
            <person name="Bowman C."/>
            <person name="Cotton M.D."/>
            <person name="Fujii C."/>
            <person name="Garland S.A."/>
            <person name="Hatch B."/>
            <person name="Horst K."/>
            <person name="Roberts K.M."/>
            <person name="Sandusky M."/>
            <person name="Weidman J.F."/>
            <person name="Smith H.O."/>
            <person name="Venter J.C."/>
        </authorList>
    </citation>
    <scope>NUCLEOTIDE SEQUENCE [LARGE SCALE GENOMIC DNA]</scope>
    <source>
        <strain>Nichols</strain>
    </source>
</reference>
<comment type="function">
    <text evidence="1">This protein is located at the 30S-50S ribosomal subunit interface and may play a role in the structure and function of the aminoacyl-tRNA binding site.</text>
</comment>
<comment type="similarity">
    <text evidence="2">Belongs to the bacterial ribosomal protein bL19 family.</text>
</comment>